<sequence>MIGILNRWRQFGRRYFWPHLLLGMVAASLGVPLNLSGVPDHAALANTSSSQSRQNHGTTNFNSLALLHDIHRRLSFSVDYWQQHALRTVIRHLSFALAPQAAYARVQEVAETERVAPSKIQQLALLDTLNALLTHEFKPPAIIRYTEQVERPVLSPYKPGLWLAQVQGIRAGPANLS</sequence>
<comment type="function">
    <text evidence="1">Regulates secA expression by translational coupling of the secM secA operon. Translational pausing at a specific Pro residue 5 residues before the end of the protein may allow disruption of a mRNA repressor helix that normally suppresses secA translation initiation.</text>
</comment>
<comment type="subcellular location">
    <subcellularLocation>
        <location evidence="1">Cytoplasm</location>
        <location evidence="1">Cytosol</location>
    </subcellularLocation>
    <subcellularLocation>
        <location evidence="1">Periplasm</location>
    </subcellularLocation>
    <text evidence="1">The active form is cytosolic, while the periplasmic form is rapidly degraded, mainly by the tail-specific protease.</text>
</comment>
<comment type="similarity">
    <text evidence="1">Belongs to the SecM family.</text>
</comment>
<gene>
    <name evidence="1" type="primary">secM</name>
    <name type="ordered locus">YPDSF_3079</name>
</gene>
<organism>
    <name type="scientific">Yersinia pestis (strain Pestoides F)</name>
    <dbReference type="NCBI Taxonomy" id="386656"/>
    <lineage>
        <taxon>Bacteria</taxon>
        <taxon>Pseudomonadati</taxon>
        <taxon>Pseudomonadota</taxon>
        <taxon>Gammaproteobacteria</taxon>
        <taxon>Enterobacterales</taxon>
        <taxon>Yersiniaceae</taxon>
        <taxon>Yersinia</taxon>
    </lineage>
</organism>
<accession>A4TQ75</accession>
<dbReference type="EMBL" id="CP000668">
    <property type="protein sequence ID" value="ABP41437.1"/>
    <property type="molecule type" value="Genomic_DNA"/>
</dbReference>
<dbReference type="RefSeq" id="WP_002210427.1">
    <property type="nucleotide sequence ID" value="NZ_CP009715.1"/>
</dbReference>
<dbReference type="GeneID" id="57974052"/>
<dbReference type="KEGG" id="ypp:YPDSF_3079"/>
<dbReference type="PATRIC" id="fig|386656.14.peg.1281"/>
<dbReference type="GO" id="GO:0005829">
    <property type="term" value="C:cytosol"/>
    <property type="evidence" value="ECO:0007669"/>
    <property type="project" value="UniProtKB-SubCell"/>
</dbReference>
<dbReference type="GO" id="GO:0042597">
    <property type="term" value="C:periplasmic space"/>
    <property type="evidence" value="ECO:0007669"/>
    <property type="project" value="UniProtKB-SubCell"/>
</dbReference>
<dbReference type="GO" id="GO:0045182">
    <property type="term" value="F:translation regulator activity"/>
    <property type="evidence" value="ECO:0007669"/>
    <property type="project" value="InterPro"/>
</dbReference>
<dbReference type="HAMAP" id="MF_01332">
    <property type="entry name" value="SecM"/>
    <property type="match status" value="1"/>
</dbReference>
<dbReference type="InterPro" id="IPR009502">
    <property type="entry name" value="SecM"/>
</dbReference>
<dbReference type="NCBIfam" id="NF002799">
    <property type="entry name" value="PRK02943.1-1"/>
    <property type="match status" value="1"/>
</dbReference>
<dbReference type="Pfam" id="PF06558">
    <property type="entry name" value="SecM"/>
    <property type="match status" value="1"/>
</dbReference>
<dbReference type="PIRSF" id="PIRSF004572">
    <property type="entry name" value="SecM"/>
    <property type="match status" value="1"/>
</dbReference>
<reference key="1">
    <citation type="submission" date="2007-02" db="EMBL/GenBank/DDBJ databases">
        <title>Complete sequence of chromosome of Yersinia pestis Pestoides F.</title>
        <authorList>
            <consortium name="US DOE Joint Genome Institute"/>
            <person name="Copeland A."/>
            <person name="Lucas S."/>
            <person name="Lapidus A."/>
            <person name="Barry K."/>
            <person name="Detter J.C."/>
            <person name="Glavina del Rio T."/>
            <person name="Hammon N."/>
            <person name="Israni S."/>
            <person name="Dalin E."/>
            <person name="Tice H."/>
            <person name="Pitluck S."/>
            <person name="Di Bartolo G."/>
            <person name="Chain P."/>
            <person name="Malfatti S."/>
            <person name="Shin M."/>
            <person name="Vergez L."/>
            <person name="Schmutz J."/>
            <person name="Larimer F."/>
            <person name="Land M."/>
            <person name="Hauser L."/>
            <person name="Worsham P."/>
            <person name="Chu M."/>
            <person name="Bearden S."/>
            <person name="Garcia E."/>
            <person name="Richardson P."/>
        </authorList>
    </citation>
    <scope>NUCLEOTIDE SEQUENCE [LARGE SCALE GENOMIC DNA]</scope>
    <source>
        <strain>Pestoides F</strain>
    </source>
</reference>
<proteinExistence type="inferred from homology"/>
<evidence type="ECO:0000255" key="1">
    <source>
        <dbReference type="HAMAP-Rule" id="MF_01332"/>
    </source>
</evidence>
<protein>
    <recommendedName>
        <fullName evidence="1">Secretion monitor</fullName>
    </recommendedName>
</protein>
<keyword id="KW-0963">Cytoplasm</keyword>
<keyword id="KW-0574">Periplasm</keyword>
<keyword id="KW-0732">Signal</keyword>
<name>SECM_YERPP</name>
<feature type="signal peptide" evidence="1">
    <location>
        <begin position="1"/>
        <end position="37"/>
    </location>
</feature>
<feature type="chain" id="PRO_5000237006" description="Secretion monitor">
    <location>
        <begin position="38"/>
        <end position="177"/>
    </location>
</feature>